<protein>
    <recommendedName>
        <fullName evidence="1">Fibrillarin-like rRNA/tRNA 2'-O-methyltransferase</fullName>
        <ecNumber evidence="1">2.1.1.-</ecNumber>
    </recommendedName>
</protein>
<comment type="function">
    <text evidence="1">Involved in pre-rRNA and tRNA processing. Utilizes the methyl donor S-adenosyl-L-methionine to catalyze the site-specific 2'-hydroxyl methylation of ribose moieties in rRNA and tRNA. Site specificity is provided by a guide RNA that base pairs with the substrate. Methylation occurs at a characteristic distance from the sequence involved in base pairing with the guide RNA.</text>
</comment>
<comment type="subunit">
    <text evidence="1">Interacts with nop5. Component of box C/D small ribonucleoprotein (sRNP) particles that contain rpl7ae, FlpA and nop5, plus a guide RNA.</text>
</comment>
<comment type="similarity">
    <text evidence="1">Belongs to the methyltransferase superfamily. Fibrillarin family.</text>
</comment>
<evidence type="ECO:0000255" key="1">
    <source>
        <dbReference type="HAMAP-Rule" id="MF_00351"/>
    </source>
</evidence>
<proteinExistence type="inferred from homology"/>
<reference key="1">
    <citation type="journal article" date="2000" name="Proc. Natl. Acad. Sci. U.S.A.">
        <title>Genome sequence of Halobacterium species NRC-1.</title>
        <authorList>
            <person name="Ng W.V."/>
            <person name="Kennedy S.P."/>
            <person name="Mahairas G.G."/>
            <person name="Berquist B."/>
            <person name="Pan M."/>
            <person name="Shukla H.D."/>
            <person name="Lasky S.R."/>
            <person name="Baliga N.S."/>
            <person name="Thorsson V."/>
            <person name="Sbrogna J."/>
            <person name="Swartzell S."/>
            <person name="Weir D."/>
            <person name="Hall J."/>
            <person name="Dahl T.A."/>
            <person name="Welti R."/>
            <person name="Goo Y.A."/>
            <person name="Leithauser B."/>
            <person name="Keller K."/>
            <person name="Cruz R."/>
            <person name="Danson M.J."/>
            <person name="Hough D.W."/>
            <person name="Maddocks D.G."/>
            <person name="Jablonski P.E."/>
            <person name="Krebs M.P."/>
            <person name="Angevine C.M."/>
            <person name="Dale H."/>
            <person name="Isenbarger T.A."/>
            <person name="Peck R.F."/>
            <person name="Pohlschroder M."/>
            <person name="Spudich J.L."/>
            <person name="Jung K.-H."/>
            <person name="Alam M."/>
            <person name="Freitas T."/>
            <person name="Hou S."/>
            <person name="Daniels C.J."/>
            <person name="Dennis P.P."/>
            <person name="Omer A.D."/>
            <person name="Ebhardt H."/>
            <person name="Lowe T.M."/>
            <person name="Liang P."/>
            <person name="Riley M."/>
            <person name="Hood L."/>
            <person name="DasSarma S."/>
        </authorList>
    </citation>
    <scope>NUCLEOTIDE SEQUENCE [LARGE SCALE GENOMIC DNA]</scope>
    <source>
        <strain>ATCC 700922 / JCM 11081 / NRC-1</strain>
    </source>
</reference>
<sequence>MSLPAGVQRRSFGDEDGVLATRGEPAYGEPVVDGWRRWDAHRSKLGATFELGLDTGLSGGDAVLYLGAANGTTVSHVADFAGPTYAVEFAPRPVTDLLAVADSRERLFPLLKDARAPETYAHVVESGVDAIVQDVATRGQADVALSNRQFLADDGRLVAALKARSEDVTADPAAVFEDLLGRLRDGYEVRATARMEPFHEDHLAVVATPR</sequence>
<keyword id="KW-0489">Methyltransferase</keyword>
<keyword id="KW-1185">Reference proteome</keyword>
<keyword id="KW-0694">RNA-binding</keyword>
<keyword id="KW-0698">rRNA processing</keyword>
<keyword id="KW-0808">Transferase</keyword>
<keyword id="KW-0819">tRNA processing</keyword>
<organism>
    <name type="scientific">Halobacterium salinarum (strain ATCC 700922 / JCM 11081 / NRC-1)</name>
    <name type="common">Halobacterium halobium</name>
    <dbReference type="NCBI Taxonomy" id="64091"/>
    <lineage>
        <taxon>Archaea</taxon>
        <taxon>Methanobacteriati</taxon>
        <taxon>Methanobacteriota</taxon>
        <taxon>Stenosarchaea group</taxon>
        <taxon>Halobacteria</taxon>
        <taxon>Halobacteriales</taxon>
        <taxon>Halobacteriaceae</taxon>
        <taxon>Halobacterium</taxon>
        <taxon>Halobacterium salinarum NRC-34001</taxon>
    </lineage>
</organism>
<name>FLPA_HALSA</name>
<dbReference type="EC" id="2.1.1.-" evidence="1"/>
<dbReference type="EMBL" id="AE004437">
    <property type="protein sequence ID" value="AAG19552.1"/>
    <property type="molecule type" value="Genomic_DNA"/>
</dbReference>
<dbReference type="PIR" id="D84273">
    <property type="entry name" value="D84273"/>
</dbReference>
<dbReference type="RefSeq" id="WP_010902848.1">
    <property type="nucleotide sequence ID" value="NC_002607.1"/>
</dbReference>
<dbReference type="SMR" id="Q9HQG3"/>
<dbReference type="FunCoup" id="Q9HQG3">
    <property type="interactions" value="116"/>
</dbReference>
<dbReference type="STRING" id="64091.VNG_1176G"/>
<dbReference type="PaxDb" id="64091-VNG_1176G"/>
<dbReference type="KEGG" id="hal:VNG_1176G"/>
<dbReference type="PATRIC" id="fig|64091.14.peg.900"/>
<dbReference type="HOGENOM" id="CLU_059055_2_0_2"/>
<dbReference type="InParanoid" id="Q9HQG3"/>
<dbReference type="OrthoDB" id="6244at2157"/>
<dbReference type="PhylomeDB" id="Q9HQG3"/>
<dbReference type="Proteomes" id="UP000000554">
    <property type="component" value="Chromosome"/>
</dbReference>
<dbReference type="GO" id="GO:1990259">
    <property type="term" value="F:histone H2AQ104 methyltransferase activity"/>
    <property type="evidence" value="ECO:0000318"/>
    <property type="project" value="GO_Central"/>
</dbReference>
<dbReference type="GO" id="GO:0003723">
    <property type="term" value="F:RNA binding"/>
    <property type="evidence" value="ECO:0000318"/>
    <property type="project" value="GO_Central"/>
</dbReference>
<dbReference type="GO" id="GO:0008649">
    <property type="term" value="F:rRNA methyltransferase activity"/>
    <property type="evidence" value="ECO:0000318"/>
    <property type="project" value="GO_Central"/>
</dbReference>
<dbReference type="GO" id="GO:0000494">
    <property type="term" value="P:box C/D sno(s)RNA 3'-end processing"/>
    <property type="evidence" value="ECO:0000318"/>
    <property type="project" value="GO_Central"/>
</dbReference>
<dbReference type="GO" id="GO:0031167">
    <property type="term" value="P:rRNA methylation"/>
    <property type="evidence" value="ECO:0000318"/>
    <property type="project" value="GO_Central"/>
</dbReference>
<dbReference type="GO" id="GO:0008033">
    <property type="term" value="P:tRNA processing"/>
    <property type="evidence" value="ECO:0007669"/>
    <property type="project" value="UniProtKB-UniRule"/>
</dbReference>
<dbReference type="Gene3D" id="3.40.50.150">
    <property type="entry name" value="Vaccinia Virus protein VP39"/>
    <property type="match status" value="1"/>
</dbReference>
<dbReference type="HAMAP" id="MF_00351">
    <property type="entry name" value="RNA_methyltransf_FlpA"/>
    <property type="match status" value="1"/>
</dbReference>
<dbReference type="InterPro" id="IPR000692">
    <property type="entry name" value="Fibrillarin"/>
</dbReference>
<dbReference type="InterPro" id="IPR020813">
    <property type="entry name" value="Fibrillarin_CS"/>
</dbReference>
<dbReference type="InterPro" id="IPR029063">
    <property type="entry name" value="SAM-dependent_MTases_sf"/>
</dbReference>
<dbReference type="NCBIfam" id="NF003276">
    <property type="entry name" value="PRK04266.1-2"/>
    <property type="match status" value="1"/>
</dbReference>
<dbReference type="NCBIfam" id="NF003278">
    <property type="entry name" value="PRK04266.1-4"/>
    <property type="match status" value="1"/>
</dbReference>
<dbReference type="PANTHER" id="PTHR10335:SF17">
    <property type="entry name" value="FIBRILLARIN"/>
    <property type="match status" value="1"/>
</dbReference>
<dbReference type="PANTHER" id="PTHR10335">
    <property type="entry name" value="RRNA 2-O-METHYLTRANSFERASE FIBRILLARIN"/>
    <property type="match status" value="1"/>
</dbReference>
<dbReference type="Pfam" id="PF01269">
    <property type="entry name" value="Fibrillarin"/>
    <property type="match status" value="1"/>
</dbReference>
<dbReference type="PIRSF" id="PIRSF006540">
    <property type="entry name" value="Nop17p"/>
    <property type="match status" value="1"/>
</dbReference>
<dbReference type="PRINTS" id="PR00052">
    <property type="entry name" value="FIBRILLARIN"/>
</dbReference>
<dbReference type="SMART" id="SM01206">
    <property type="entry name" value="Fibrillarin"/>
    <property type="match status" value="1"/>
</dbReference>
<dbReference type="SUPFAM" id="SSF53335">
    <property type="entry name" value="S-adenosyl-L-methionine-dependent methyltransferases"/>
    <property type="match status" value="1"/>
</dbReference>
<dbReference type="PROSITE" id="PS00566">
    <property type="entry name" value="FIBRILLARIN"/>
    <property type="match status" value="1"/>
</dbReference>
<gene>
    <name evidence="1" type="primary">flpA</name>
    <name type="synonym">fib</name>
    <name type="ordered locus">VNG_1176G</name>
</gene>
<feature type="chain" id="PRO_0000148531" description="Fibrillarin-like rRNA/tRNA 2'-O-methyltransferase">
    <location>
        <begin position="1"/>
        <end position="210"/>
    </location>
</feature>
<feature type="binding site" evidence="1">
    <location>
        <begin position="72"/>
        <end position="73"/>
    </location>
    <ligand>
        <name>S-adenosyl-L-methionine</name>
        <dbReference type="ChEBI" id="CHEBI:59789"/>
    </ligand>
</feature>
<feature type="binding site" evidence="1">
    <location>
        <begin position="88"/>
        <end position="89"/>
    </location>
    <ligand>
        <name>S-adenosyl-L-methionine</name>
        <dbReference type="ChEBI" id="CHEBI:59789"/>
    </ligand>
</feature>
<feature type="binding site" evidence="1">
    <location>
        <begin position="113"/>
        <end position="114"/>
    </location>
    <ligand>
        <name>S-adenosyl-L-methionine</name>
        <dbReference type="ChEBI" id="CHEBI:59789"/>
    </ligand>
</feature>
<feature type="binding site" evidence="1">
    <location>
        <begin position="134"/>
        <end position="137"/>
    </location>
    <ligand>
        <name>S-adenosyl-L-methionine</name>
        <dbReference type="ChEBI" id="CHEBI:59789"/>
    </ligand>
</feature>
<accession>Q9HQG3</accession>